<keyword id="KW-0175">Coiled coil</keyword>
<keyword id="KW-1185">Reference proteome</keyword>
<dbReference type="EMBL" id="AB069997">
    <property type="protein sequence ID" value="BAB62942.1"/>
    <property type="molecule type" value="mRNA"/>
</dbReference>
<dbReference type="SMR" id="Q95K30"/>
<dbReference type="STRING" id="9541.ENSMFAP00000017298"/>
<dbReference type="eggNOG" id="KOG1386">
    <property type="taxonomic scope" value="Eukaryota"/>
</dbReference>
<dbReference type="eggNOG" id="KOG3639">
    <property type="taxonomic scope" value="Eukaryota"/>
</dbReference>
<dbReference type="Proteomes" id="UP000233100">
    <property type="component" value="Unplaced"/>
</dbReference>
<dbReference type="GO" id="GO:0035869">
    <property type="term" value="C:ciliary transition zone"/>
    <property type="evidence" value="ECO:0007669"/>
    <property type="project" value="TreeGrafter"/>
</dbReference>
<dbReference type="GO" id="GO:1905515">
    <property type="term" value="P:non-motile cilium assembly"/>
    <property type="evidence" value="ECO:0007669"/>
    <property type="project" value="TreeGrafter"/>
</dbReference>
<dbReference type="GO" id="GO:1904491">
    <property type="term" value="P:protein localization to ciliary transition zone"/>
    <property type="evidence" value="ECO:0007669"/>
    <property type="project" value="TreeGrafter"/>
</dbReference>
<dbReference type="InterPro" id="IPR041510">
    <property type="entry name" value="DUF5523"/>
</dbReference>
<dbReference type="InterPro" id="IPR052434">
    <property type="entry name" value="Tectonic-like_complex_comp"/>
</dbReference>
<dbReference type="PANTHER" id="PTHR20837">
    <property type="entry name" value="CENTROSOMAL PROTEIN-RELATED"/>
    <property type="match status" value="1"/>
</dbReference>
<dbReference type="PANTHER" id="PTHR20837:SF2">
    <property type="entry name" value="PROTEIN CC2D2B"/>
    <property type="match status" value="1"/>
</dbReference>
<dbReference type="Pfam" id="PF17661">
    <property type="entry name" value="DUF5523"/>
    <property type="match status" value="1"/>
</dbReference>
<feature type="chain" id="PRO_0000320924" description="Protein CC2D2B homolog">
    <location>
        <begin position="1"/>
        <end position="256"/>
    </location>
</feature>
<feature type="region of interest" description="Disordered" evidence="2">
    <location>
        <begin position="1"/>
        <end position="24"/>
    </location>
</feature>
<feature type="coiled-coil region" evidence="1">
    <location>
        <begin position="136"/>
        <end position="159"/>
    </location>
</feature>
<feature type="coiled-coil region" evidence="1">
    <location>
        <begin position="194"/>
        <end position="214"/>
    </location>
</feature>
<feature type="compositionally biased region" description="Basic and acidic residues" evidence="2">
    <location>
        <begin position="13"/>
        <end position="22"/>
    </location>
</feature>
<accession>Q95K30</accession>
<organism>
    <name type="scientific">Macaca fascicularis</name>
    <name type="common">Crab-eating macaque</name>
    <name type="synonym">Cynomolgus monkey</name>
    <dbReference type="NCBI Taxonomy" id="9541"/>
    <lineage>
        <taxon>Eukaryota</taxon>
        <taxon>Metazoa</taxon>
        <taxon>Chordata</taxon>
        <taxon>Craniata</taxon>
        <taxon>Vertebrata</taxon>
        <taxon>Euteleostomi</taxon>
        <taxon>Mammalia</taxon>
        <taxon>Eutheria</taxon>
        <taxon>Euarchontoglires</taxon>
        <taxon>Primates</taxon>
        <taxon>Haplorrhini</taxon>
        <taxon>Catarrhini</taxon>
        <taxon>Cercopithecidae</taxon>
        <taxon>Cercopithecinae</taxon>
        <taxon>Macaca</taxon>
    </lineage>
</organism>
<reference key="1">
    <citation type="journal article" date="2002" name="BMC Genomics">
        <title>Cynomolgus monkey testicular cDNAs for discovery of novel human genes in the human genome sequence.</title>
        <authorList>
            <person name="Osada N."/>
            <person name="Hida M."/>
            <person name="Kusuda J."/>
            <person name="Tanuma R."/>
            <person name="Hirata M."/>
            <person name="Suto Y."/>
            <person name="Hirai M."/>
            <person name="Terao K."/>
            <person name="Sugano S."/>
            <person name="Hashimoto K."/>
        </authorList>
    </citation>
    <scope>NUCLEOTIDE SEQUENCE [LARGE SCALE MRNA]</scope>
    <source>
        <tissue>Testis</tissue>
    </source>
</reference>
<evidence type="ECO:0000255" key="1"/>
<evidence type="ECO:0000256" key="2">
    <source>
        <dbReference type="SAM" id="MobiDB-lite"/>
    </source>
</evidence>
<evidence type="ECO:0000305" key="3"/>
<sequence length="256" mass="29616">MSEEMDNVTAEEITDKHLQKDLDAEENQNVVKTMRGKVREKLKISKINKGEKSSMEQLVESKIYQRSKLSPQTEVSLDESLSFFILSGEEGSALGKSSEQRPVKDSYPKCFSLGVNLQNVAESEDEEFMKEFILTDLLKVKAADYEDDQEQIKKQKANIFVPSSSPVVNQHKLPKDMMPRILEDEGFYIQRKPEIYKKTCNKMENRLLKLEEGKCWFGESGEIMSLPTPIKQSWNFRLNVRKEPLNPLLKTIYRKL</sequence>
<protein>
    <recommendedName>
        <fullName evidence="3">Protein CC2D2B homolog</fullName>
    </recommendedName>
</protein>
<gene>
    <name type="ORF">QtsA-10739</name>
</gene>
<proteinExistence type="evidence at transcript level"/>
<name>C2D2B_MACFA</name>